<name>CAPSD_FBNY2</name>
<reference key="1">
    <citation type="journal article" date="1997" name="Virology">
        <title>Analysis of six DNA components of the faba bean necrotic yellows virus genome and their structural affinity to related plant virus genomes.</title>
        <authorList>
            <person name="Katul L."/>
            <person name="Maiss E."/>
            <person name="Morozov S.Y."/>
            <person name="Vetten H.J."/>
        </authorList>
    </citation>
    <scope>NUCLEOTIDE SEQUENCE [GENOMIC DNA]</scope>
</reference>
<proteinExistence type="inferred from homology"/>
<accession>O39831</accession>
<feature type="chain" id="PRO_0000222434" description="Capsid protein">
    <location>
        <begin position="1"/>
        <end position="172"/>
    </location>
</feature>
<feature type="region of interest" description="Disordered" evidence="1">
    <location>
        <begin position="1"/>
        <end position="26"/>
    </location>
</feature>
<feature type="compositionally biased region" description="Basic residues" evidence="1">
    <location>
        <begin position="11"/>
        <end position="20"/>
    </location>
</feature>
<organism>
    <name type="scientific">Faba bean necrotic yellows virus (isolate Syrian SV292-88)</name>
    <name type="common">FBNYV</name>
    <dbReference type="NCBI Taxonomy" id="291604"/>
    <lineage>
        <taxon>Viruses</taxon>
        <taxon>Monodnaviria</taxon>
        <taxon>Shotokuvirae</taxon>
        <taxon>Cressdnaviricota</taxon>
        <taxon>Arfiviricetes</taxon>
        <taxon>Mulpavirales</taxon>
        <taxon>Nanoviridae</taxon>
        <taxon>Nanovirus</taxon>
        <taxon>Faba bean necrotic yellows virus</taxon>
    </lineage>
</organism>
<comment type="subcellular location">
    <subcellularLocation>
        <location evidence="2">Virion</location>
    </subcellularLocation>
</comment>
<comment type="similarity">
    <text evidence="2">Belongs to the nanoviridae capsid protein family.</text>
</comment>
<organismHost>
    <name type="scientific">Cicer arietinum</name>
    <name type="common">Chickpea</name>
    <name type="synonym">Garbanzo</name>
    <dbReference type="NCBI Taxonomy" id="3827"/>
</organismHost>
<organismHost>
    <name type="scientific">Lens culinaris</name>
    <name type="common">Lentil</name>
    <name type="synonym">Cicer lens</name>
    <dbReference type="NCBI Taxonomy" id="3864"/>
</organismHost>
<organismHost>
    <name type="scientific">Phaseolus vulgaris</name>
    <name type="common">Kidney bean</name>
    <name type="synonym">French bean</name>
    <dbReference type="NCBI Taxonomy" id="3885"/>
</organismHost>
<organismHost>
    <name type="scientific">Vicia faba</name>
    <name type="common">Broad bean</name>
    <name type="synonym">Faba vulgaris</name>
    <dbReference type="NCBI Taxonomy" id="3906"/>
</organismHost>
<sequence>MASKWNWSGTKGRRTPRRPYGRPYKSSVPTTRVVVHQSAVLKKDEVVGTEIKPEGDVARYKMKKVMLTCTLRMAPGELVNYLIVKCNSPISSWSAAFTSPALLVKESCQDMITIIAKGKVESTGVAGTDCTKSFNRFIKLGAGITQTQHLYVVLYTSVALKAVLEHRVYVEV</sequence>
<protein>
    <recommendedName>
        <fullName>Capsid protein</fullName>
        <shortName>CP</shortName>
    </recommendedName>
    <alternativeName>
        <fullName>Coat protein</fullName>
    </alternativeName>
</protein>
<gene>
    <name type="primary">DNA-S</name>
    <name type="synonym">C5</name>
</gene>
<evidence type="ECO:0000256" key="1">
    <source>
        <dbReference type="SAM" id="MobiDB-lite"/>
    </source>
</evidence>
<evidence type="ECO:0000305" key="2"/>
<keyword id="KW-0167">Capsid protein</keyword>
<keyword id="KW-1185">Reference proteome</keyword>
<keyword id="KW-1140">T=1 icosahedral capsid protein</keyword>
<keyword id="KW-0946">Virion</keyword>
<dbReference type="EMBL" id="Y11408">
    <property type="protein sequence ID" value="CAA72212.1"/>
    <property type="molecule type" value="Genomic_DNA"/>
</dbReference>
<dbReference type="SMR" id="O39831"/>
<dbReference type="Proteomes" id="UP001515460">
    <property type="component" value="Genome"/>
</dbReference>
<dbReference type="GO" id="GO:0039615">
    <property type="term" value="C:T=1 icosahedral viral capsid"/>
    <property type="evidence" value="ECO:0007669"/>
    <property type="project" value="UniProtKB-KW"/>
</dbReference>
<dbReference type="InterPro" id="IPR006753">
    <property type="entry name" value="Nanovirus_coat"/>
</dbReference>
<dbReference type="Pfam" id="PF04660">
    <property type="entry name" value="Nanovirus_coat"/>
    <property type="match status" value="1"/>
</dbReference>